<accession>B1Y6D4</accession>
<proteinExistence type="inferred from homology"/>
<protein>
    <recommendedName>
        <fullName evidence="1">DNA ligase</fullName>
        <ecNumber evidence="1">6.5.1.2</ecNumber>
    </recommendedName>
    <alternativeName>
        <fullName evidence="1">Polydeoxyribonucleotide synthase [NAD(+)]</fullName>
    </alternativeName>
</protein>
<name>DNLJ_LEPCP</name>
<gene>
    <name evidence="1" type="primary">ligA</name>
    <name type="ordered locus">Lcho_2505</name>
</gene>
<feature type="chain" id="PRO_0000380408" description="DNA ligase">
    <location>
        <begin position="1"/>
        <end position="768"/>
    </location>
</feature>
<feature type="domain" description="BRCT" evidence="1">
    <location>
        <begin position="670"/>
        <end position="759"/>
    </location>
</feature>
<feature type="region of interest" description="Disordered" evidence="2">
    <location>
        <begin position="1"/>
        <end position="28"/>
    </location>
</feature>
<feature type="compositionally biased region" description="Low complexity" evidence="2">
    <location>
        <begin position="1"/>
        <end position="11"/>
    </location>
</feature>
<feature type="active site" description="N6-AMP-lysine intermediate" evidence="1">
    <location>
        <position position="150"/>
    </location>
</feature>
<feature type="binding site" evidence="1">
    <location>
        <begin position="62"/>
        <end position="66"/>
    </location>
    <ligand>
        <name>NAD(+)</name>
        <dbReference type="ChEBI" id="CHEBI:57540"/>
    </ligand>
</feature>
<feature type="binding site" evidence="1">
    <location>
        <begin position="111"/>
        <end position="112"/>
    </location>
    <ligand>
        <name>NAD(+)</name>
        <dbReference type="ChEBI" id="CHEBI:57540"/>
    </ligand>
</feature>
<feature type="binding site" evidence="1">
    <location>
        <position position="148"/>
    </location>
    <ligand>
        <name>NAD(+)</name>
        <dbReference type="ChEBI" id="CHEBI:57540"/>
    </ligand>
</feature>
<feature type="binding site" evidence="1">
    <location>
        <position position="171"/>
    </location>
    <ligand>
        <name>NAD(+)</name>
        <dbReference type="ChEBI" id="CHEBI:57540"/>
    </ligand>
</feature>
<feature type="binding site" evidence="1">
    <location>
        <position position="238"/>
    </location>
    <ligand>
        <name>NAD(+)</name>
        <dbReference type="ChEBI" id="CHEBI:57540"/>
    </ligand>
</feature>
<feature type="binding site" evidence="1">
    <location>
        <position position="361"/>
    </location>
    <ligand>
        <name>NAD(+)</name>
        <dbReference type="ChEBI" id="CHEBI:57540"/>
    </ligand>
</feature>
<feature type="binding site" evidence="1">
    <location>
        <position position="385"/>
    </location>
    <ligand>
        <name>NAD(+)</name>
        <dbReference type="ChEBI" id="CHEBI:57540"/>
    </ligand>
</feature>
<feature type="binding site" evidence="1">
    <location>
        <position position="484"/>
    </location>
    <ligand>
        <name>Zn(2+)</name>
        <dbReference type="ChEBI" id="CHEBI:29105"/>
    </ligand>
</feature>
<feature type="binding site" evidence="1">
    <location>
        <position position="487"/>
    </location>
    <ligand>
        <name>Zn(2+)</name>
        <dbReference type="ChEBI" id="CHEBI:29105"/>
    </ligand>
</feature>
<feature type="binding site" evidence="1">
    <location>
        <position position="502"/>
    </location>
    <ligand>
        <name>Zn(2+)</name>
        <dbReference type="ChEBI" id="CHEBI:29105"/>
    </ligand>
</feature>
<feature type="binding site" evidence="1">
    <location>
        <position position="508"/>
    </location>
    <ligand>
        <name>Zn(2+)</name>
        <dbReference type="ChEBI" id="CHEBI:29105"/>
    </ligand>
</feature>
<reference key="1">
    <citation type="submission" date="2008-03" db="EMBL/GenBank/DDBJ databases">
        <title>Complete sequence of Leptothrix cholodnii SP-6.</title>
        <authorList>
            <consortium name="US DOE Joint Genome Institute"/>
            <person name="Copeland A."/>
            <person name="Lucas S."/>
            <person name="Lapidus A."/>
            <person name="Glavina del Rio T."/>
            <person name="Dalin E."/>
            <person name="Tice H."/>
            <person name="Bruce D."/>
            <person name="Goodwin L."/>
            <person name="Pitluck S."/>
            <person name="Chertkov O."/>
            <person name="Brettin T."/>
            <person name="Detter J.C."/>
            <person name="Han C."/>
            <person name="Kuske C.R."/>
            <person name="Schmutz J."/>
            <person name="Larimer F."/>
            <person name="Land M."/>
            <person name="Hauser L."/>
            <person name="Kyrpides N."/>
            <person name="Lykidis A."/>
            <person name="Emerson D."/>
            <person name="Richardson P."/>
        </authorList>
    </citation>
    <scope>NUCLEOTIDE SEQUENCE [LARGE SCALE GENOMIC DNA]</scope>
    <source>
        <strain>ATCC 51168 / LMG 8142 / SP-6</strain>
    </source>
</reference>
<keyword id="KW-0227">DNA damage</keyword>
<keyword id="KW-0234">DNA repair</keyword>
<keyword id="KW-0235">DNA replication</keyword>
<keyword id="KW-0436">Ligase</keyword>
<keyword id="KW-0460">Magnesium</keyword>
<keyword id="KW-0464">Manganese</keyword>
<keyword id="KW-0479">Metal-binding</keyword>
<keyword id="KW-0520">NAD</keyword>
<keyword id="KW-1185">Reference proteome</keyword>
<keyword id="KW-0862">Zinc</keyword>
<sequence>MSPSAPANSAPDPDRNGVPDVGPASAAPPDLQTAAARAAWLRSTLQHHAHLYYVLDAPELPDAEYDRLFQELQAIEAMYPALRTADSPTQRVLGQVRDGFVVVRHAVPMLSIRTETDTEASGAVAFDARVRRELELPDDAPPISYATELKFDGLAINLRYEHGVLVQAATRGDGESGEDVTQNIRTIGQIPLRLRWAPTLGADAHSLPPEGARFALGRPGGETGAPDLAPAVLEVRGEVYMRRDDFEALNERQRERIARGDKGEKTFVNPRNAAAGAVRQLDPAIAAQRPLSFFAYGLGEVQGWALPHTHAGLLDALAAAGLPVCAERAVVQGADGLVAFHQRIGALRDSLAFDIDGVVYKVDSLALQQRLGFVTREPRWAVAHKYPAQEQMTRLLGIEIQVGRTGKLTPVARLEPVFVGGTTVSNATLHNEDEARRKDVRVGDTVIVRRAGDVIPQVVGVVLEQRPDDVGEPFDLYQRLGGRCPVCGSAIARPEGEADWRCTGGLFCAAQRKQAILHFASRRMMDIEGLGDKLVDQLVDAGVIRTLPELYKLGVAKLTALERMGEKSAVNLVAALEKSKQTTLARFLFSLGIRQVGEATAKALARHFGALDRVMDASVDQLQAVPDVGPIVALSIRTFFDQPHNREVVEQLRAAGIHWAEHEASAAADAAELPLAGKTLVLTGTLPTLGRDAAKDLIEAAGGKVSGSVSKKTHFVVAGAEAGSKLDKARELGLVILDEAGLLALLNEAEADADADAEGLPDSPVAPT</sequence>
<organism>
    <name type="scientific">Leptothrix cholodnii (strain ATCC 51168 / LMG 8142 / SP-6)</name>
    <name type="common">Leptothrix discophora (strain SP-6)</name>
    <dbReference type="NCBI Taxonomy" id="395495"/>
    <lineage>
        <taxon>Bacteria</taxon>
        <taxon>Pseudomonadati</taxon>
        <taxon>Pseudomonadota</taxon>
        <taxon>Betaproteobacteria</taxon>
        <taxon>Burkholderiales</taxon>
        <taxon>Sphaerotilaceae</taxon>
        <taxon>Leptothrix</taxon>
    </lineage>
</organism>
<comment type="function">
    <text evidence="1">DNA ligase that catalyzes the formation of phosphodiester linkages between 5'-phosphoryl and 3'-hydroxyl groups in double-stranded DNA using NAD as a coenzyme and as the energy source for the reaction. It is essential for DNA replication and repair of damaged DNA.</text>
</comment>
<comment type="catalytic activity">
    <reaction evidence="1">
        <text>NAD(+) + (deoxyribonucleotide)n-3'-hydroxyl + 5'-phospho-(deoxyribonucleotide)m = (deoxyribonucleotide)n+m + AMP + beta-nicotinamide D-nucleotide.</text>
        <dbReference type="EC" id="6.5.1.2"/>
    </reaction>
</comment>
<comment type="cofactor">
    <cofactor evidence="1">
        <name>Mg(2+)</name>
        <dbReference type="ChEBI" id="CHEBI:18420"/>
    </cofactor>
    <cofactor evidence="1">
        <name>Mn(2+)</name>
        <dbReference type="ChEBI" id="CHEBI:29035"/>
    </cofactor>
</comment>
<comment type="similarity">
    <text evidence="1">Belongs to the NAD-dependent DNA ligase family. LigA subfamily.</text>
</comment>
<evidence type="ECO:0000255" key="1">
    <source>
        <dbReference type="HAMAP-Rule" id="MF_01588"/>
    </source>
</evidence>
<evidence type="ECO:0000256" key="2">
    <source>
        <dbReference type="SAM" id="MobiDB-lite"/>
    </source>
</evidence>
<dbReference type="EC" id="6.5.1.2" evidence="1"/>
<dbReference type="EMBL" id="CP001013">
    <property type="protein sequence ID" value="ACB34770.1"/>
    <property type="molecule type" value="Genomic_DNA"/>
</dbReference>
<dbReference type="RefSeq" id="WP_012347526.1">
    <property type="nucleotide sequence ID" value="NC_010524.1"/>
</dbReference>
<dbReference type="SMR" id="B1Y6D4"/>
<dbReference type="STRING" id="395495.Lcho_2505"/>
<dbReference type="KEGG" id="lch:Lcho_2505"/>
<dbReference type="eggNOG" id="COG0272">
    <property type="taxonomic scope" value="Bacteria"/>
</dbReference>
<dbReference type="HOGENOM" id="CLU_007764_2_1_4"/>
<dbReference type="OrthoDB" id="9759736at2"/>
<dbReference type="Proteomes" id="UP000001693">
    <property type="component" value="Chromosome"/>
</dbReference>
<dbReference type="GO" id="GO:0005829">
    <property type="term" value="C:cytosol"/>
    <property type="evidence" value="ECO:0007669"/>
    <property type="project" value="TreeGrafter"/>
</dbReference>
<dbReference type="GO" id="GO:0003677">
    <property type="term" value="F:DNA binding"/>
    <property type="evidence" value="ECO:0007669"/>
    <property type="project" value="InterPro"/>
</dbReference>
<dbReference type="GO" id="GO:0003911">
    <property type="term" value="F:DNA ligase (NAD+) activity"/>
    <property type="evidence" value="ECO:0007669"/>
    <property type="project" value="UniProtKB-UniRule"/>
</dbReference>
<dbReference type="GO" id="GO:0046872">
    <property type="term" value="F:metal ion binding"/>
    <property type="evidence" value="ECO:0007669"/>
    <property type="project" value="UniProtKB-KW"/>
</dbReference>
<dbReference type="GO" id="GO:0006281">
    <property type="term" value="P:DNA repair"/>
    <property type="evidence" value="ECO:0007669"/>
    <property type="project" value="UniProtKB-KW"/>
</dbReference>
<dbReference type="GO" id="GO:0006260">
    <property type="term" value="P:DNA replication"/>
    <property type="evidence" value="ECO:0007669"/>
    <property type="project" value="UniProtKB-KW"/>
</dbReference>
<dbReference type="CDD" id="cd00114">
    <property type="entry name" value="LIGANc"/>
    <property type="match status" value="1"/>
</dbReference>
<dbReference type="FunFam" id="1.10.150.20:FF:000006">
    <property type="entry name" value="DNA ligase"/>
    <property type="match status" value="1"/>
</dbReference>
<dbReference type="FunFam" id="1.10.150.20:FF:000007">
    <property type="entry name" value="DNA ligase"/>
    <property type="match status" value="1"/>
</dbReference>
<dbReference type="FunFam" id="2.40.50.140:FF:000012">
    <property type="entry name" value="DNA ligase"/>
    <property type="match status" value="1"/>
</dbReference>
<dbReference type="Gene3D" id="6.20.10.30">
    <property type="match status" value="1"/>
</dbReference>
<dbReference type="Gene3D" id="1.10.150.20">
    <property type="entry name" value="5' to 3' exonuclease, C-terminal subdomain"/>
    <property type="match status" value="2"/>
</dbReference>
<dbReference type="Gene3D" id="3.40.50.10190">
    <property type="entry name" value="BRCT domain"/>
    <property type="match status" value="1"/>
</dbReference>
<dbReference type="Gene3D" id="3.30.470.30">
    <property type="entry name" value="DNA ligase/mRNA capping enzyme"/>
    <property type="match status" value="1"/>
</dbReference>
<dbReference type="Gene3D" id="1.10.287.610">
    <property type="entry name" value="Helix hairpin bin"/>
    <property type="match status" value="1"/>
</dbReference>
<dbReference type="Gene3D" id="2.40.50.140">
    <property type="entry name" value="Nucleic acid-binding proteins"/>
    <property type="match status" value="1"/>
</dbReference>
<dbReference type="HAMAP" id="MF_01588">
    <property type="entry name" value="DNA_ligase_A"/>
    <property type="match status" value="1"/>
</dbReference>
<dbReference type="InterPro" id="IPR001357">
    <property type="entry name" value="BRCT_dom"/>
</dbReference>
<dbReference type="InterPro" id="IPR036420">
    <property type="entry name" value="BRCT_dom_sf"/>
</dbReference>
<dbReference type="InterPro" id="IPR041663">
    <property type="entry name" value="DisA/LigA_HHH"/>
</dbReference>
<dbReference type="InterPro" id="IPR001679">
    <property type="entry name" value="DNA_ligase"/>
</dbReference>
<dbReference type="InterPro" id="IPR018239">
    <property type="entry name" value="DNA_ligase_AS"/>
</dbReference>
<dbReference type="InterPro" id="IPR033136">
    <property type="entry name" value="DNA_ligase_CS"/>
</dbReference>
<dbReference type="InterPro" id="IPR013839">
    <property type="entry name" value="DNAligase_adenylation"/>
</dbReference>
<dbReference type="InterPro" id="IPR013840">
    <property type="entry name" value="DNAligase_N"/>
</dbReference>
<dbReference type="InterPro" id="IPR003583">
    <property type="entry name" value="Hlx-hairpin-Hlx_DNA-bd_motif"/>
</dbReference>
<dbReference type="InterPro" id="IPR012340">
    <property type="entry name" value="NA-bd_OB-fold"/>
</dbReference>
<dbReference type="InterPro" id="IPR004150">
    <property type="entry name" value="NAD_DNA_ligase_OB"/>
</dbReference>
<dbReference type="InterPro" id="IPR010994">
    <property type="entry name" value="RuvA_2-like"/>
</dbReference>
<dbReference type="InterPro" id="IPR004149">
    <property type="entry name" value="Znf_DNAligase_C4"/>
</dbReference>
<dbReference type="NCBIfam" id="TIGR00575">
    <property type="entry name" value="dnlj"/>
    <property type="match status" value="1"/>
</dbReference>
<dbReference type="NCBIfam" id="NF005932">
    <property type="entry name" value="PRK07956.1"/>
    <property type="match status" value="1"/>
</dbReference>
<dbReference type="PANTHER" id="PTHR23389">
    <property type="entry name" value="CHROMOSOME TRANSMISSION FIDELITY FACTOR 18"/>
    <property type="match status" value="1"/>
</dbReference>
<dbReference type="PANTHER" id="PTHR23389:SF9">
    <property type="entry name" value="DNA LIGASE"/>
    <property type="match status" value="1"/>
</dbReference>
<dbReference type="Pfam" id="PF00533">
    <property type="entry name" value="BRCT"/>
    <property type="match status" value="1"/>
</dbReference>
<dbReference type="Pfam" id="PF01653">
    <property type="entry name" value="DNA_ligase_aden"/>
    <property type="match status" value="2"/>
</dbReference>
<dbReference type="Pfam" id="PF03120">
    <property type="entry name" value="DNA_ligase_OB"/>
    <property type="match status" value="1"/>
</dbReference>
<dbReference type="Pfam" id="PF03119">
    <property type="entry name" value="DNA_ligase_ZBD"/>
    <property type="match status" value="1"/>
</dbReference>
<dbReference type="Pfam" id="PF12826">
    <property type="entry name" value="HHH_2"/>
    <property type="match status" value="1"/>
</dbReference>
<dbReference type="Pfam" id="PF14520">
    <property type="entry name" value="HHH_5"/>
    <property type="match status" value="1"/>
</dbReference>
<dbReference type="Pfam" id="PF22745">
    <property type="entry name" value="Nlig-Ia"/>
    <property type="match status" value="1"/>
</dbReference>
<dbReference type="PIRSF" id="PIRSF001604">
    <property type="entry name" value="LigA"/>
    <property type="match status" value="1"/>
</dbReference>
<dbReference type="SMART" id="SM00292">
    <property type="entry name" value="BRCT"/>
    <property type="match status" value="1"/>
</dbReference>
<dbReference type="SMART" id="SM00278">
    <property type="entry name" value="HhH1"/>
    <property type="match status" value="3"/>
</dbReference>
<dbReference type="SMART" id="SM00532">
    <property type="entry name" value="LIGANc"/>
    <property type="match status" value="1"/>
</dbReference>
<dbReference type="SUPFAM" id="SSF52113">
    <property type="entry name" value="BRCT domain"/>
    <property type="match status" value="1"/>
</dbReference>
<dbReference type="SUPFAM" id="SSF56091">
    <property type="entry name" value="DNA ligase/mRNA capping enzyme, catalytic domain"/>
    <property type="match status" value="1"/>
</dbReference>
<dbReference type="SUPFAM" id="SSF50249">
    <property type="entry name" value="Nucleic acid-binding proteins"/>
    <property type="match status" value="1"/>
</dbReference>
<dbReference type="SUPFAM" id="SSF47781">
    <property type="entry name" value="RuvA domain 2-like"/>
    <property type="match status" value="1"/>
</dbReference>
<dbReference type="PROSITE" id="PS50172">
    <property type="entry name" value="BRCT"/>
    <property type="match status" value="1"/>
</dbReference>
<dbReference type="PROSITE" id="PS01055">
    <property type="entry name" value="DNA_LIGASE_N1"/>
    <property type="match status" value="1"/>
</dbReference>
<dbReference type="PROSITE" id="PS01056">
    <property type="entry name" value="DNA_LIGASE_N2"/>
    <property type="match status" value="1"/>
</dbReference>